<sequence length="344" mass="39123">MLTDRQLLILQVIIDDFIRSGQPVGSRTLSKKHEIALSSATIRNEMADLEELGYIEKTHVSSGRVPSEKGYRYYVDHLLSPQRLTQEDIQKIKSIFAERIYELEKVVQKSAQILSDLTNYTSIALGPAVKENKLKRIQIIPLNQQTAVAIIVTDTGHVENHVITVPASVNPSDLEKMVNILNERLIGVPLVDLKDKIYKEVADVLRTHIHNYDSMLKTIVDTLDIPQEEKMFFAGTTNMLNQPEFSDIQKVRSLMKMIEQEKDFYRLLRKHNRKGIQVTIGRENQLSGMENCSLITATYSIGNEQLGTIAILGPTRMEYSRVITILNRVASDLSTALTKWYQNN</sequence>
<gene>
    <name evidence="1" type="primary">hrcA</name>
    <name type="ordered locus">GWCH70_2439</name>
</gene>
<dbReference type="EMBL" id="CP001638">
    <property type="protein sequence ID" value="ACS25135.1"/>
    <property type="molecule type" value="Genomic_DNA"/>
</dbReference>
<dbReference type="SMR" id="C5D4U3"/>
<dbReference type="STRING" id="471223.GWCH70_2439"/>
<dbReference type="KEGG" id="gwc:GWCH70_2439"/>
<dbReference type="eggNOG" id="COG1420">
    <property type="taxonomic scope" value="Bacteria"/>
</dbReference>
<dbReference type="HOGENOM" id="CLU_050019_1_0_9"/>
<dbReference type="OrthoDB" id="9783139at2"/>
<dbReference type="GO" id="GO:0003677">
    <property type="term" value="F:DNA binding"/>
    <property type="evidence" value="ECO:0007669"/>
    <property type="project" value="InterPro"/>
</dbReference>
<dbReference type="GO" id="GO:0045892">
    <property type="term" value="P:negative regulation of DNA-templated transcription"/>
    <property type="evidence" value="ECO:0007669"/>
    <property type="project" value="UniProtKB-UniRule"/>
</dbReference>
<dbReference type="FunFam" id="1.10.10.10:FF:000049">
    <property type="entry name" value="Heat-inducible transcription repressor HrcA"/>
    <property type="match status" value="1"/>
</dbReference>
<dbReference type="Gene3D" id="3.30.450.40">
    <property type="match status" value="1"/>
</dbReference>
<dbReference type="Gene3D" id="3.30.390.60">
    <property type="entry name" value="Heat-inducible transcription repressor hrca homolog, domain 3"/>
    <property type="match status" value="1"/>
</dbReference>
<dbReference type="Gene3D" id="1.10.10.10">
    <property type="entry name" value="Winged helix-like DNA-binding domain superfamily/Winged helix DNA-binding domain"/>
    <property type="match status" value="1"/>
</dbReference>
<dbReference type="HAMAP" id="MF_00081">
    <property type="entry name" value="HrcA"/>
    <property type="match status" value="1"/>
</dbReference>
<dbReference type="InterPro" id="IPR029016">
    <property type="entry name" value="GAF-like_dom_sf"/>
</dbReference>
<dbReference type="InterPro" id="IPR002571">
    <property type="entry name" value="HrcA"/>
</dbReference>
<dbReference type="InterPro" id="IPR021153">
    <property type="entry name" value="HrcA_C"/>
</dbReference>
<dbReference type="InterPro" id="IPR036388">
    <property type="entry name" value="WH-like_DNA-bd_sf"/>
</dbReference>
<dbReference type="InterPro" id="IPR036390">
    <property type="entry name" value="WH_DNA-bd_sf"/>
</dbReference>
<dbReference type="InterPro" id="IPR023120">
    <property type="entry name" value="WHTH_transcript_rep_HrcA_IDD"/>
</dbReference>
<dbReference type="NCBIfam" id="TIGR00331">
    <property type="entry name" value="hrcA"/>
    <property type="match status" value="1"/>
</dbReference>
<dbReference type="PANTHER" id="PTHR34824">
    <property type="entry name" value="HEAT-INDUCIBLE TRANSCRIPTION REPRESSOR HRCA"/>
    <property type="match status" value="1"/>
</dbReference>
<dbReference type="PANTHER" id="PTHR34824:SF1">
    <property type="entry name" value="HEAT-INDUCIBLE TRANSCRIPTION REPRESSOR HRCA"/>
    <property type="match status" value="1"/>
</dbReference>
<dbReference type="Pfam" id="PF01628">
    <property type="entry name" value="HrcA"/>
    <property type="match status" value="1"/>
</dbReference>
<dbReference type="PIRSF" id="PIRSF005485">
    <property type="entry name" value="HrcA"/>
    <property type="match status" value="1"/>
</dbReference>
<dbReference type="SUPFAM" id="SSF55781">
    <property type="entry name" value="GAF domain-like"/>
    <property type="match status" value="1"/>
</dbReference>
<dbReference type="SUPFAM" id="SSF46785">
    <property type="entry name" value="Winged helix' DNA-binding domain"/>
    <property type="match status" value="1"/>
</dbReference>
<evidence type="ECO:0000255" key="1">
    <source>
        <dbReference type="HAMAP-Rule" id="MF_00081"/>
    </source>
</evidence>
<accession>C5D4U3</accession>
<keyword id="KW-0678">Repressor</keyword>
<keyword id="KW-0346">Stress response</keyword>
<keyword id="KW-0804">Transcription</keyword>
<keyword id="KW-0805">Transcription regulation</keyword>
<protein>
    <recommendedName>
        <fullName evidence="1">Heat-inducible transcription repressor HrcA</fullName>
    </recommendedName>
</protein>
<proteinExistence type="inferred from homology"/>
<name>HRCA_GEOSW</name>
<organism>
    <name type="scientific">Geobacillus sp. (strain WCH70)</name>
    <dbReference type="NCBI Taxonomy" id="471223"/>
    <lineage>
        <taxon>Bacteria</taxon>
        <taxon>Bacillati</taxon>
        <taxon>Bacillota</taxon>
        <taxon>Bacilli</taxon>
        <taxon>Bacillales</taxon>
        <taxon>Anoxybacillaceae</taxon>
        <taxon>Geobacillus</taxon>
    </lineage>
</organism>
<feature type="chain" id="PRO_1000202551" description="Heat-inducible transcription repressor HrcA">
    <location>
        <begin position="1"/>
        <end position="344"/>
    </location>
</feature>
<reference key="1">
    <citation type="submission" date="2009-06" db="EMBL/GenBank/DDBJ databases">
        <title>Complete sequence of chromosome of Geopacillus sp. WCH70.</title>
        <authorList>
            <consortium name="US DOE Joint Genome Institute"/>
            <person name="Lucas S."/>
            <person name="Copeland A."/>
            <person name="Lapidus A."/>
            <person name="Glavina del Rio T."/>
            <person name="Dalin E."/>
            <person name="Tice H."/>
            <person name="Bruce D."/>
            <person name="Goodwin L."/>
            <person name="Pitluck S."/>
            <person name="Chertkov O."/>
            <person name="Brettin T."/>
            <person name="Detter J.C."/>
            <person name="Han C."/>
            <person name="Larimer F."/>
            <person name="Land M."/>
            <person name="Hauser L."/>
            <person name="Kyrpides N."/>
            <person name="Mikhailova N."/>
            <person name="Brumm P."/>
            <person name="Mead D.A."/>
            <person name="Richardson P."/>
        </authorList>
    </citation>
    <scope>NUCLEOTIDE SEQUENCE [LARGE SCALE GENOMIC DNA]</scope>
    <source>
        <strain>WCH70</strain>
    </source>
</reference>
<comment type="function">
    <text evidence="1">Negative regulator of class I heat shock genes (grpE-dnaK-dnaJ and groELS operons). Prevents heat-shock induction of these operons.</text>
</comment>
<comment type="similarity">
    <text evidence="1">Belongs to the HrcA family.</text>
</comment>